<gene>
    <name evidence="1" type="primary">fluC2</name>
    <name evidence="1" type="synonym">crcB2</name>
    <name type="ordered locus">STH542</name>
</gene>
<organism>
    <name type="scientific">Symbiobacterium thermophilum (strain DSM 24528 / JCM 14929 / IAM 14863 / T)</name>
    <dbReference type="NCBI Taxonomy" id="292459"/>
    <lineage>
        <taxon>Bacteria</taxon>
        <taxon>Bacillati</taxon>
        <taxon>Bacillota</taxon>
        <taxon>Clostridia</taxon>
        <taxon>Eubacteriales</taxon>
        <taxon>Symbiobacteriaceae</taxon>
        <taxon>Symbiobacterium</taxon>
    </lineage>
</organism>
<dbReference type="EMBL" id="AP006840">
    <property type="protein sequence ID" value="BAD39527.1"/>
    <property type="molecule type" value="Genomic_DNA"/>
</dbReference>
<dbReference type="SMR" id="Q67S16"/>
<dbReference type="STRING" id="292459.STH542"/>
<dbReference type="KEGG" id="sth:STH542"/>
<dbReference type="eggNOG" id="COG0239">
    <property type="taxonomic scope" value="Bacteria"/>
</dbReference>
<dbReference type="HOGENOM" id="CLU_114342_2_3_9"/>
<dbReference type="Proteomes" id="UP000000417">
    <property type="component" value="Chromosome"/>
</dbReference>
<dbReference type="GO" id="GO:0005886">
    <property type="term" value="C:plasma membrane"/>
    <property type="evidence" value="ECO:0007669"/>
    <property type="project" value="UniProtKB-SubCell"/>
</dbReference>
<dbReference type="GO" id="GO:0062054">
    <property type="term" value="F:fluoride channel activity"/>
    <property type="evidence" value="ECO:0007669"/>
    <property type="project" value="UniProtKB-UniRule"/>
</dbReference>
<dbReference type="GO" id="GO:0046872">
    <property type="term" value="F:metal ion binding"/>
    <property type="evidence" value="ECO:0007669"/>
    <property type="project" value="UniProtKB-KW"/>
</dbReference>
<dbReference type="GO" id="GO:0140114">
    <property type="term" value="P:cellular detoxification of fluoride"/>
    <property type="evidence" value="ECO:0007669"/>
    <property type="project" value="UniProtKB-UniRule"/>
</dbReference>
<dbReference type="HAMAP" id="MF_00454">
    <property type="entry name" value="FluC"/>
    <property type="match status" value="1"/>
</dbReference>
<dbReference type="InterPro" id="IPR003691">
    <property type="entry name" value="FluC"/>
</dbReference>
<dbReference type="NCBIfam" id="TIGR00494">
    <property type="entry name" value="crcB"/>
    <property type="match status" value="1"/>
</dbReference>
<dbReference type="PANTHER" id="PTHR28259">
    <property type="entry name" value="FLUORIDE EXPORT PROTEIN 1-RELATED"/>
    <property type="match status" value="1"/>
</dbReference>
<dbReference type="PANTHER" id="PTHR28259:SF1">
    <property type="entry name" value="FLUORIDE EXPORT PROTEIN 1-RELATED"/>
    <property type="match status" value="1"/>
</dbReference>
<dbReference type="Pfam" id="PF02537">
    <property type="entry name" value="CRCB"/>
    <property type="match status" value="1"/>
</dbReference>
<feature type="chain" id="PRO_0000110199" description="Fluoride-specific ion channel FluC 2">
    <location>
        <begin position="1"/>
        <end position="123"/>
    </location>
</feature>
<feature type="transmembrane region" description="Helical" evidence="1">
    <location>
        <begin position="30"/>
        <end position="50"/>
    </location>
</feature>
<feature type="transmembrane region" description="Helical" evidence="1">
    <location>
        <begin position="68"/>
        <end position="88"/>
    </location>
</feature>
<feature type="transmembrane region" description="Helical" evidence="1">
    <location>
        <begin position="93"/>
        <end position="113"/>
    </location>
</feature>
<feature type="binding site" evidence="1">
    <location>
        <position position="72"/>
    </location>
    <ligand>
        <name>Na(+)</name>
        <dbReference type="ChEBI" id="CHEBI:29101"/>
        <note>structural</note>
    </ligand>
</feature>
<feature type="binding site" evidence="1">
    <location>
        <position position="75"/>
    </location>
    <ligand>
        <name>Na(+)</name>
        <dbReference type="ChEBI" id="CHEBI:29101"/>
        <note>structural</note>
    </ligand>
</feature>
<sequence length="123" mass="13000">MAGVAAGGALGAWARHGLGSWLTALLPSTFPLPTLMINVLGALLLGFVAGYGIERGRLPEAWRLPVTVGFIGSFTTFSTWSVDTVLLLDAGRWPLALANVGISLAVGLAAVWVGRRLAFRWRV</sequence>
<keyword id="KW-1003">Cell membrane</keyword>
<keyword id="KW-0407">Ion channel</keyword>
<keyword id="KW-0406">Ion transport</keyword>
<keyword id="KW-0472">Membrane</keyword>
<keyword id="KW-0479">Metal-binding</keyword>
<keyword id="KW-1185">Reference proteome</keyword>
<keyword id="KW-0915">Sodium</keyword>
<keyword id="KW-0812">Transmembrane</keyword>
<keyword id="KW-1133">Transmembrane helix</keyword>
<keyword id="KW-0813">Transport</keyword>
<protein>
    <recommendedName>
        <fullName evidence="1">Fluoride-specific ion channel FluC 2</fullName>
    </recommendedName>
</protein>
<accession>Q67S16</accession>
<reference key="1">
    <citation type="journal article" date="2004" name="Nucleic Acids Res.">
        <title>Genome sequence of Symbiobacterium thermophilum, an uncultivable bacterium that depends on microbial commensalism.</title>
        <authorList>
            <person name="Ueda K."/>
            <person name="Yamashita A."/>
            <person name="Ishikawa J."/>
            <person name="Shimada M."/>
            <person name="Watsuji T."/>
            <person name="Morimura K."/>
            <person name="Ikeda H."/>
            <person name="Hattori M."/>
            <person name="Beppu T."/>
        </authorList>
    </citation>
    <scope>NUCLEOTIDE SEQUENCE [LARGE SCALE GENOMIC DNA]</scope>
    <source>
        <strain>DSM 24528 / JCM 14929 / IAM 14863 / T</strain>
    </source>
</reference>
<proteinExistence type="inferred from homology"/>
<comment type="function">
    <text evidence="1">Fluoride-specific ion channel. Important for reducing fluoride concentration in the cell, thus reducing its toxicity.</text>
</comment>
<comment type="catalytic activity">
    <reaction evidence="1">
        <text>fluoride(in) = fluoride(out)</text>
        <dbReference type="Rhea" id="RHEA:76159"/>
        <dbReference type="ChEBI" id="CHEBI:17051"/>
    </reaction>
    <physiologicalReaction direction="left-to-right" evidence="1">
        <dbReference type="Rhea" id="RHEA:76160"/>
    </physiologicalReaction>
</comment>
<comment type="activity regulation">
    <text evidence="1">Na(+) is not transported, but it plays an essential structural role and its presence is essential for fluoride channel function.</text>
</comment>
<comment type="subcellular location">
    <subcellularLocation>
        <location evidence="1">Cell membrane</location>
        <topology evidence="1">Multi-pass membrane protein</topology>
    </subcellularLocation>
</comment>
<comment type="similarity">
    <text evidence="1">Belongs to the fluoride channel Fluc/FEX (TC 1.A.43) family.</text>
</comment>
<evidence type="ECO:0000255" key="1">
    <source>
        <dbReference type="HAMAP-Rule" id="MF_00454"/>
    </source>
</evidence>
<name>FLUC2_SYMTH</name>